<reference key="1">
    <citation type="journal article" date="2006" name="PLoS Biol.">
        <title>The genome of deep-sea vent chemolithoautotroph Thiomicrospira crunogena XCL-2.</title>
        <authorList>
            <person name="Scott K.M."/>
            <person name="Sievert S.M."/>
            <person name="Abril F.N."/>
            <person name="Ball L.A."/>
            <person name="Barrett C.J."/>
            <person name="Blake R.A."/>
            <person name="Boller A.J."/>
            <person name="Chain P.S.G."/>
            <person name="Clark J.A."/>
            <person name="Davis C.R."/>
            <person name="Detter C."/>
            <person name="Do K.F."/>
            <person name="Dobrinski K.P."/>
            <person name="Faza B.I."/>
            <person name="Fitzpatrick K.A."/>
            <person name="Freyermuth S.K."/>
            <person name="Harmer T.L."/>
            <person name="Hauser L.J."/>
            <person name="Huegler M."/>
            <person name="Kerfeld C.A."/>
            <person name="Klotz M.G."/>
            <person name="Kong W.W."/>
            <person name="Land M."/>
            <person name="Lapidus A."/>
            <person name="Larimer F.W."/>
            <person name="Longo D.L."/>
            <person name="Lucas S."/>
            <person name="Malfatti S.A."/>
            <person name="Massey S.E."/>
            <person name="Martin D.D."/>
            <person name="McCuddin Z."/>
            <person name="Meyer F."/>
            <person name="Moore J.L."/>
            <person name="Ocampo L.H. Jr."/>
            <person name="Paul J.H."/>
            <person name="Paulsen I.T."/>
            <person name="Reep D.K."/>
            <person name="Ren Q."/>
            <person name="Ross R.L."/>
            <person name="Sato P.Y."/>
            <person name="Thomas P."/>
            <person name="Tinkham L.E."/>
            <person name="Zeruth G.T."/>
        </authorList>
    </citation>
    <scope>NUCLEOTIDE SEQUENCE [LARGE SCALE GENOMIC DNA]</scope>
    <source>
        <strain>DSM 25203 / XCL-2</strain>
    </source>
</reference>
<gene>
    <name evidence="1" type="primary">nrdR</name>
    <name type="ordered locus">Tcr_1401</name>
</gene>
<comment type="function">
    <text evidence="1">Negatively regulates transcription of bacterial ribonucleotide reductase nrd genes and operons by binding to NrdR-boxes.</text>
</comment>
<comment type="cofactor">
    <cofactor evidence="1">
        <name>Zn(2+)</name>
        <dbReference type="ChEBI" id="CHEBI:29105"/>
    </cofactor>
    <text evidence="1">Binds 1 zinc ion.</text>
</comment>
<comment type="similarity">
    <text evidence="1">Belongs to the NrdR family.</text>
</comment>
<evidence type="ECO:0000255" key="1">
    <source>
        <dbReference type="HAMAP-Rule" id="MF_00440"/>
    </source>
</evidence>
<accession>Q31FS7</accession>
<proteinExistence type="inferred from homology"/>
<protein>
    <recommendedName>
        <fullName evidence="1">Transcriptional repressor NrdR</fullName>
    </recommendedName>
</protein>
<dbReference type="EMBL" id="CP000109">
    <property type="protein sequence ID" value="ABB41996.1"/>
    <property type="molecule type" value="Genomic_DNA"/>
</dbReference>
<dbReference type="SMR" id="Q31FS7"/>
<dbReference type="STRING" id="317025.Tcr_1401"/>
<dbReference type="KEGG" id="tcx:Tcr_1401"/>
<dbReference type="eggNOG" id="COG1327">
    <property type="taxonomic scope" value="Bacteria"/>
</dbReference>
<dbReference type="HOGENOM" id="CLU_108412_0_0_6"/>
<dbReference type="OrthoDB" id="9807461at2"/>
<dbReference type="GO" id="GO:0005524">
    <property type="term" value="F:ATP binding"/>
    <property type="evidence" value="ECO:0007669"/>
    <property type="project" value="UniProtKB-KW"/>
</dbReference>
<dbReference type="GO" id="GO:0003677">
    <property type="term" value="F:DNA binding"/>
    <property type="evidence" value="ECO:0007669"/>
    <property type="project" value="UniProtKB-KW"/>
</dbReference>
<dbReference type="GO" id="GO:0008270">
    <property type="term" value="F:zinc ion binding"/>
    <property type="evidence" value="ECO:0007669"/>
    <property type="project" value="UniProtKB-UniRule"/>
</dbReference>
<dbReference type="GO" id="GO:0045892">
    <property type="term" value="P:negative regulation of DNA-templated transcription"/>
    <property type="evidence" value="ECO:0007669"/>
    <property type="project" value="UniProtKB-UniRule"/>
</dbReference>
<dbReference type="HAMAP" id="MF_00440">
    <property type="entry name" value="NrdR"/>
    <property type="match status" value="1"/>
</dbReference>
<dbReference type="InterPro" id="IPR005144">
    <property type="entry name" value="ATP-cone_dom"/>
</dbReference>
<dbReference type="InterPro" id="IPR055173">
    <property type="entry name" value="NrdR-like_N"/>
</dbReference>
<dbReference type="InterPro" id="IPR003796">
    <property type="entry name" value="RNR_NrdR-like"/>
</dbReference>
<dbReference type="NCBIfam" id="TIGR00244">
    <property type="entry name" value="transcriptional regulator NrdR"/>
    <property type="match status" value="1"/>
</dbReference>
<dbReference type="PANTHER" id="PTHR30455">
    <property type="entry name" value="TRANSCRIPTIONAL REPRESSOR NRDR"/>
    <property type="match status" value="1"/>
</dbReference>
<dbReference type="PANTHER" id="PTHR30455:SF2">
    <property type="entry name" value="TRANSCRIPTIONAL REPRESSOR NRDR"/>
    <property type="match status" value="1"/>
</dbReference>
<dbReference type="Pfam" id="PF03477">
    <property type="entry name" value="ATP-cone"/>
    <property type="match status" value="1"/>
</dbReference>
<dbReference type="Pfam" id="PF22811">
    <property type="entry name" value="Zn_ribbon_NrdR"/>
    <property type="match status" value="1"/>
</dbReference>
<dbReference type="PROSITE" id="PS51161">
    <property type="entry name" value="ATP_CONE"/>
    <property type="match status" value="1"/>
</dbReference>
<sequence length="154" mass="17674">MHCPFCNAPDTKVIDSRLATEGAQVRRRRECMSCAERFTTYETAELTLPRVIKSDGNRERFDDDKIRRGLIKALEKRPVASEAIDQVVNRIHKQLTAEGVREIPSSQIGELLMEALKELDQVAYVRFASVYRSFQDVNAFREEIEKLVKATKSQ</sequence>
<name>NRDR_HYDCU</name>
<keyword id="KW-0067">ATP-binding</keyword>
<keyword id="KW-0238">DNA-binding</keyword>
<keyword id="KW-0479">Metal-binding</keyword>
<keyword id="KW-0547">Nucleotide-binding</keyword>
<keyword id="KW-0678">Repressor</keyword>
<keyword id="KW-0804">Transcription</keyword>
<keyword id="KW-0805">Transcription regulation</keyword>
<keyword id="KW-0862">Zinc</keyword>
<keyword id="KW-0863">Zinc-finger</keyword>
<organism>
    <name type="scientific">Hydrogenovibrio crunogenus (strain DSM 25203 / XCL-2)</name>
    <name type="common">Thiomicrospira crunogena</name>
    <dbReference type="NCBI Taxonomy" id="317025"/>
    <lineage>
        <taxon>Bacteria</taxon>
        <taxon>Pseudomonadati</taxon>
        <taxon>Pseudomonadota</taxon>
        <taxon>Gammaproteobacteria</taxon>
        <taxon>Thiotrichales</taxon>
        <taxon>Piscirickettsiaceae</taxon>
        <taxon>Hydrogenovibrio</taxon>
    </lineage>
</organism>
<feature type="chain" id="PRO_0000230905" description="Transcriptional repressor NrdR">
    <location>
        <begin position="1"/>
        <end position="154"/>
    </location>
</feature>
<feature type="domain" description="ATP-cone" evidence="1">
    <location>
        <begin position="49"/>
        <end position="139"/>
    </location>
</feature>
<feature type="zinc finger region" evidence="1">
    <location>
        <begin position="3"/>
        <end position="34"/>
    </location>
</feature>